<gene>
    <name type="primary">TCTP</name>
    <name type="ordered locus">Os11g0660500</name>
    <name type="ordered locus">LOC_Os11g43900</name>
</gene>
<protein>
    <recommendedName>
        <fullName>Translationally-controlled tumor protein homolog</fullName>
        <shortName>TCTP</shortName>
    </recommendedName>
</protein>
<keyword id="KW-0106">Calcium</keyword>
<keyword id="KW-0963">Cytoplasm</keyword>
<keyword id="KW-0903">Direct protein sequencing</keyword>
<keyword id="KW-1185">Reference proteome</keyword>
<comment type="function">
    <text evidence="1">Involved in calcium binding and microtubule stabilization.</text>
</comment>
<comment type="subcellular location">
    <subcellularLocation>
        <location evidence="1">Cytoplasm</location>
    </subcellularLocation>
</comment>
<comment type="similarity">
    <text evidence="2">Belongs to the TCTP family.</text>
</comment>
<dbReference type="EMBL" id="D12626">
    <property type="protein sequence ID" value="BAA02151.1"/>
    <property type="molecule type" value="mRNA"/>
</dbReference>
<dbReference type="EMBL" id="DP000010">
    <property type="protein sequence ID" value="ABA95199.1"/>
    <property type="molecule type" value="Genomic_DNA"/>
</dbReference>
<dbReference type="EMBL" id="AP008217">
    <property type="status" value="NOT_ANNOTATED_CDS"/>
    <property type="molecule type" value="Genomic_DNA"/>
</dbReference>
<dbReference type="EMBL" id="AP014967">
    <property type="protein sequence ID" value="BAT15135.1"/>
    <property type="molecule type" value="Genomic_DNA"/>
</dbReference>
<dbReference type="PIR" id="A38958">
    <property type="entry name" value="A38958"/>
</dbReference>
<dbReference type="RefSeq" id="XP_015617060.1">
    <property type="nucleotide sequence ID" value="XM_015761574.1"/>
</dbReference>
<dbReference type="SMR" id="P35681"/>
<dbReference type="FunCoup" id="P35681">
    <property type="interactions" value="2683"/>
</dbReference>
<dbReference type="STRING" id="39947.P35681"/>
<dbReference type="PaxDb" id="39947-P35681"/>
<dbReference type="EnsemblPlants" id="Os11t0660500-01">
    <property type="protein sequence ID" value="Os11t0660500-01"/>
    <property type="gene ID" value="Os11g0660500"/>
</dbReference>
<dbReference type="Gramene" id="Os11t0660500-01">
    <property type="protein sequence ID" value="Os11t0660500-01"/>
    <property type="gene ID" value="Os11g0660500"/>
</dbReference>
<dbReference type="eggNOG" id="KOG1727">
    <property type="taxonomic scope" value="Eukaryota"/>
</dbReference>
<dbReference type="HOGENOM" id="CLU_095877_1_1_1"/>
<dbReference type="InParanoid" id="P35681"/>
<dbReference type="OMA" id="CAMITEG"/>
<dbReference type="OrthoDB" id="10248936at2759"/>
<dbReference type="Proteomes" id="UP000000763">
    <property type="component" value="Chromosome 11"/>
</dbReference>
<dbReference type="Proteomes" id="UP000059680">
    <property type="component" value="Chromosome 11"/>
</dbReference>
<dbReference type="ExpressionAtlas" id="P35681">
    <property type="expression patterns" value="baseline and differential"/>
</dbReference>
<dbReference type="GO" id="GO:0005737">
    <property type="term" value="C:cytoplasm"/>
    <property type="evidence" value="ECO:0000318"/>
    <property type="project" value="GO_Central"/>
</dbReference>
<dbReference type="GO" id="GO:0005509">
    <property type="term" value="F:calcium ion binding"/>
    <property type="evidence" value="ECO:0000318"/>
    <property type="project" value="GO_Central"/>
</dbReference>
<dbReference type="FunFam" id="2.170.150.10:FF:000003">
    <property type="entry name" value="Translationally-controlled tumor protein homolog"/>
    <property type="match status" value="1"/>
</dbReference>
<dbReference type="Gene3D" id="2.170.150.10">
    <property type="entry name" value="Metal Binding Protein, Guanine Nucleotide Exchange Factor, Chain A"/>
    <property type="match status" value="1"/>
</dbReference>
<dbReference type="InterPro" id="IPR011057">
    <property type="entry name" value="Mss4-like_sf"/>
</dbReference>
<dbReference type="InterPro" id="IPR011323">
    <property type="entry name" value="Mss4/transl-control_tumour"/>
</dbReference>
<dbReference type="InterPro" id="IPR034737">
    <property type="entry name" value="TCTP"/>
</dbReference>
<dbReference type="InterPro" id="IPR018103">
    <property type="entry name" value="Translation_control_tumour_CS"/>
</dbReference>
<dbReference type="InterPro" id="IPR018105">
    <property type="entry name" value="Translational_control_tumour_p"/>
</dbReference>
<dbReference type="PANTHER" id="PTHR11991">
    <property type="entry name" value="TRANSLATIONALLY CONTROLLED TUMOR PROTEIN-RELATED"/>
    <property type="match status" value="1"/>
</dbReference>
<dbReference type="PANTHER" id="PTHR11991:SF0">
    <property type="entry name" value="TRANSLATIONALLY-CONTROLLED TUMOR PROTEIN"/>
    <property type="match status" value="1"/>
</dbReference>
<dbReference type="Pfam" id="PF00838">
    <property type="entry name" value="TCTP"/>
    <property type="match status" value="1"/>
</dbReference>
<dbReference type="PRINTS" id="PR01653">
    <property type="entry name" value="TCTPROTEIN"/>
</dbReference>
<dbReference type="SUPFAM" id="SSF51316">
    <property type="entry name" value="Mss4-like"/>
    <property type="match status" value="1"/>
</dbReference>
<dbReference type="PROSITE" id="PS01002">
    <property type="entry name" value="TCTP_1"/>
    <property type="match status" value="1"/>
</dbReference>
<dbReference type="PROSITE" id="PS01003">
    <property type="entry name" value="TCTP_2"/>
    <property type="match status" value="1"/>
</dbReference>
<dbReference type="PROSITE" id="PS51797">
    <property type="entry name" value="TCTP_3"/>
    <property type="match status" value="1"/>
</dbReference>
<name>TCTP_ORYSJ</name>
<sequence length="168" mass="18946">MLVYQDLLTGDELLSDSFPYREIENGILWEVDGKWVVQGAIDVDIGANPSAEGGGDDEGVDDQAVKVVDIVDTFRLQEQPPFDKKQFVTFMKRYIKNLSAKLDAEKQEEFKKNIEGATKYLLGKLKDLQFFVGESMHDDGGLVFAYYKDGATDPTFLYFSHGLKEVKC</sequence>
<evidence type="ECO:0000250" key="1"/>
<evidence type="ECO:0000255" key="2">
    <source>
        <dbReference type="PROSITE-ProRule" id="PRU01133"/>
    </source>
</evidence>
<reference key="1">
    <citation type="submission" date="1992-07" db="EMBL/GenBank/DDBJ databases">
        <title>A Oryza sativa cDNA clone homologous to human translationary controlled tumor protein.</title>
        <authorList>
            <person name="Nishi R."/>
            <person name="Uchimiya H."/>
            <person name="Kato A."/>
        </authorList>
    </citation>
    <scope>NUCLEOTIDE SEQUENCE [MRNA]</scope>
    <source>
        <tissue>Callus</tissue>
    </source>
</reference>
<reference key="2">
    <citation type="journal article" date="2005" name="BMC Biol.">
        <title>The sequence of rice chromosomes 11 and 12, rich in disease resistance genes and recent gene duplications.</title>
        <authorList>
            <consortium name="The rice chromosomes 11 and 12 sequencing consortia"/>
        </authorList>
    </citation>
    <scope>NUCLEOTIDE SEQUENCE [LARGE SCALE GENOMIC DNA]</scope>
    <source>
        <strain>cv. Nipponbare</strain>
    </source>
</reference>
<reference key="3">
    <citation type="journal article" date="2005" name="Nature">
        <title>The map-based sequence of the rice genome.</title>
        <authorList>
            <consortium name="International rice genome sequencing project (IRGSP)"/>
        </authorList>
    </citation>
    <scope>NUCLEOTIDE SEQUENCE [LARGE SCALE GENOMIC DNA]</scope>
    <source>
        <strain>cv. Nipponbare</strain>
    </source>
</reference>
<reference key="4">
    <citation type="journal article" date="2008" name="Nucleic Acids Res.">
        <title>The rice annotation project database (RAP-DB): 2008 update.</title>
        <authorList>
            <consortium name="The rice annotation project (RAP)"/>
        </authorList>
    </citation>
    <scope>GENOME REANNOTATION</scope>
    <source>
        <strain>cv. Nipponbare</strain>
    </source>
</reference>
<reference key="5">
    <citation type="journal article" date="2013" name="Rice">
        <title>Improvement of the Oryza sativa Nipponbare reference genome using next generation sequence and optical map data.</title>
        <authorList>
            <person name="Kawahara Y."/>
            <person name="de la Bastide M."/>
            <person name="Hamilton J.P."/>
            <person name="Kanamori H."/>
            <person name="McCombie W.R."/>
            <person name="Ouyang S."/>
            <person name="Schwartz D.C."/>
            <person name="Tanaka T."/>
            <person name="Wu J."/>
            <person name="Zhou S."/>
            <person name="Childs K.L."/>
            <person name="Davidson R.M."/>
            <person name="Lin H."/>
            <person name="Quesada-Ocampo L."/>
            <person name="Vaillancourt B."/>
            <person name="Sakai H."/>
            <person name="Lee S.S."/>
            <person name="Kim J."/>
            <person name="Numa H."/>
            <person name="Itoh T."/>
            <person name="Buell C.R."/>
            <person name="Matsumoto T."/>
        </authorList>
    </citation>
    <scope>GENOME REANNOTATION</scope>
    <source>
        <strain>cv. Nipponbare</strain>
    </source>
</reference>
<reference key="6">
    <citation type="journal article" date="2004" name="Nucleic Acids Res.">
        <title>Rice proteome database based on two-dimensional polyacrylamide gel electrophoresis: its status in 2003.</title>
        <authorList>
            <person name="Komatsu S."/>
            <person name="Kojima K."/>
            <person name="Suzuki K."/>
            <person name="Ozaki K."/>
            <person name="Higo K."/>
        </authorList>
    </citation>
    <scope>PROTEIN SEQUENCE OF 1-10</scope>
    <source>
        <strain>cv. Nipponbare</strain>
        <tissue>Anther</tissue>
        <tissue>Embryo</tissue>
        <tissue>Panicle</tissue>
    </source>
</reference>
<accession>P35681</accession>
<accession>Q2R036</accession>
<feature type="chain" id="PRO_0000211304" description="Translationally-controlled tumor protein homolog">
    <location>
        <begin position="1"/>
        <end position="168"/>
    </location>
</feature>
<feature type="domain" description="TCTP" evidence="2">
    <location>
        <begin position="1"/>
        <end position="168"/>
    </location>
</feature>
<proteinExistence type="evidence at protein level"/>
<organism>
    <name type="scientific">Oryza sativa subsp. japonica</name>
    <name type="common">Rice</name>
    <dbReference type="NCBI Taxonomy" id="39947"/>
    <lineage>
        <taxon>Eukaryota</taxon>
        <taxon>Viridiplantae</taxon>
        <taxon>Streptophyta</taxon>
        <taxon>Embryophyta</taxon>
        <taxon>Tracheophyta</taxon>
        <taxon>Spermatophyta</taxon>
        <taxon>Magnoliopsida</taxon>
        <taxon>Liliopsida</taxon>
        <taxon>Poales</taxon>
        <taxon>Poaceae</taxon>
        <taxon>BOP clade</taxon>
        <taxon>Oryzoideae</taxon>
        <taxon>Oryzeae</taxon>
        <taxon>Oryzinae</taxon>
        <taxon>Oryza</taxon>
        <taxon>Oryza sativa</taxon>
    </lineage>
</organism>